<feature type="chain" id="PRO_0000252840" description="ATP-dependent Clp protease proteolytic subunit 3">
    <location>
        <begin position="1"/>
        <end position="202"/>
    </location>
</feature>
<feature type="active site" description="Nucleophile" evidence="1">
    <location>
        <position position="93"/>
    </location>
</feature>
<feature type="active site" evidence="1">
    <location>
        <position position="118"/>
    </location>
</feature>
<keyword id="KW-0963">Cytoplasm</keyword>
<keyword id="KW-0378">Hydrolase</keyword>
<keyword id="KW-0645">Protease</keyword>
<keyword id="KW-0720">Serine protease</keyword>
<proteinExistence type="inferred from homology"/>
<gene>
    <name evidence="1" type="primary">clpP3</name>
    <name type="ordered locus">RHA1_ro01525</name>
</gene>
<evidence type="ECO:0000255" key="1">
    <source>
        <dbReference type="HAMAP-Rule" id="MF_00444"/>
    </source>
</evidence>
<comment type="function">
    <text evidence="1">Cleaves peptides in various proteins in a process that requires ATP hydrolysis. Has a chymotrypsin-like activity. Plays a major role in the degradation of misfolded proteins.</text>
</comment>
<comment type="catalytic activity">
    <reaction evidence="1">
        <text>Hydrolysis of proteins to small peptides in the presence of ATP and magnesium. alpha-casein is the usual test substrate. In the absence of ATP, only oligopeptides shorter than five residues are hydrolyzed (such as succinyl-Leu-Tyr-|-NHMec, and Leu-Tyr-Leu-|-Tyr-Trp, in which cleavage of the -Tyr-|-Leu- and -Tyr-|-Trp bonds also occurs).</text>
        <dbReference type="EC" id="3.4.21.92"/>
    </reaction>
</comment>
<comment type="subunit">
    <text evidence="1">Fourteen ClpP subunits assemble into 2 heptameric rings which stack back to back to give a disk-like structure with a central cavity, resembling the structure of eukaryotic proteasomes.</text>
</comment>
<comment type="subcellular location">
    <subcellularLocation>
        <location evidence="1">Cytoplasm</location>
    </subcellularLocation>
</comment>
<comment type="similarity">
    <text evidence="1">Belongs to the peptidase S14 family.</text>
</comment>
<accession>Q0SGJ7</accession>
<reference key="1">
    <citation type="journal article" date="2006" name="Proc. Natl. Acad. Sci. U.S.A.">
        <title>The complete genome of Rhodococcus sp. RHA1 provides insights into a catabolic powerhouse.</title>
        <authorList>
            <person name="McLeod M.P."/>
            <person name="Warren R.L."/>
            <person name="Hsiao W.W.L."/>
            <person name="Araki N."/>
            <person name="Myhre M."/>
            <person name="Fernandes C."/>
            <person name="Miyazawa D."/>
            <person name="Wong W."/>
            <person name="Lillquist A.L."/>
            <person name="Wang D."/>
            <person name="Dosanjh M."/>
            <person name="Hara H."/>
            <person name="Petrescu A."/>
            <person name="Morin R.D."/>
            <person name="Yang G."/>
            <person name="Stott J.M."/>
            <person name="Schein J.E."/>
            <person name="Shin H."/>
            <person name="Smailus D."/>
            <person name="Siddiqui A.S."/>
            <person name="Marra M.A."/>
            <person name="Jones S.J.M."/>
            <person name="Holt R."/>
            <person name="Brinkman F.S.L."/>
            <person name="Miyauchi K."/>
            <person name="Fukuda M."/>
            <person name="Davies J.E."/>
            <person name="Mohn W.W."/>
            <person name="Eltis L.D."/>
        </authorList>
    </citation>
    <scope>NUCLEOTIDE SEQUENCE [LARGE SCALE GENOMIC DNA]</scope>
    <source>
        <strain>RHA1</strain>
    </source>
</reference>
<protein>
    <recommendedName>
        <fullName evidence="1">ATP-dependent Clp protease proteolytic subunit 3</fullName>
        <ecNumber evidence="1">3.4.21.92</ecNumber>
    </recommendedName>
    <alternativeName>
        <fullName evidence="1">Endopeptidase Clp 3</fullName>
    </alternativeName>
</protein>
<name>CLPP3_RHOJR</name>
<sequence>MTTAALPDLNYRDLLADRLFRQRTILLTGEVDDAMAERACSELVLLAAADPKRDIVLYINSPGGSVFAGLAIYDTMKLVPNDVVTVAMGFAASMGQVLLCSGTHGKRISLAHSRIMMHQPSAGIGGTAVDIAIQAESLERMKRQSQEILAAETGHPVEQIAEDSDRDRWFTADEARDYGIVDRVVSSFAEIAPHTTAPRIGL</sequence>
<dbReference type="EC" id="3.4.21.92" evidence="1"/>
<dbReference type="EMBL" id="CP000431">
    <property type="protein sequence ID" value="ABG93339.1"/>
    <property type="molecule type" value="Genomic_DNA"/>
</dbReference>
<dbReference type="RefSeq" id="WP_005568279.1">
    <property type="nucleotide sequence ID" value="NC_008268.1"/>
</dbReference>
<dbReference type="SMR" id="Q0SGJ7"/>
<dbReference type="MEROPS" id="S14.008"/>
<dbReference type="KEGG" id="rha:RHA1_ro01525"/>
<dbReference type="eggNOG" id="COG0740">
    <property type="taxonomic scope" value="Bacteria"/>
</dbReference>
<dbReference type="HOGENOM" id="CLU_058707_3_2_11"/>
<dbReference type="OrthoDB" id="9802800at2"/>
<dbReference type="Proteomes" id="UP000008710">
    <property type="component" value="Chromosome"/>
</dbReference>
<dbReference type="GO" id="GO:0005737">
    <property type="term" value="C:cytoplasm"/>
    <property type="evidence" value="ECO:0007669"/>
    <property type="project" value="UniProtKB-SubCell"/>
</dbReference>
<dbReference type="GO" id="GO:0009368">
    <property type="term" value="C:endopeptidase Clp complex"/>
    <property type="evidence" value="ECO:0007669"/>
    <property type="project" value="TreeGrafter"/>
</dbReference>
<dbReference type="GO" id="GO:0004176">
    <property type="term" value="F:ATP-dependent peptidase activity"/>
    <property type="evidence" value="ECO:0007669"/>
    <property type="project" value="InterPro"/>
</dbReference>
<dbReference type="GO" id="GO:0051117">
    <property type="term" value="F:ATPase binding"/>
    <property type="evidence" value="ECO:0007669"/>
    <property type="project" value="TreeGrafter"/>
</dbReference>
<dbReference type="GO" id="GO:0004252">
    <property type="term" value="F:serine-type endopeptidase activity"/>
    <property type="evidence" value="ECO:0007669"/>
    <property type="project" value="UniProtKB-UniRule"/>
</dbReference>
<dbReference type="GO" id="GO:0006515">
    <property type="term" value="P:protein quality control for misfolded or incompletely synthesized proteins"/>
    <property type="evidence" value="ECO:0007669"/>
    <property type="project" value="TreeGrafter"/>
</dbReference>
<dbReference type="CDD" id="cd07017">
    <property type="entry name" value="S14_ClpP_2"/>
    <property type="match status" value="1"/>
</dbReference>
<dbReference type="FunFam" id="3.90.226.10:FF:000002">
    <property type="entry name" value="ATP-dependent Clp protease proteolytic subunit"/>
    <property type="match status" value="1"/>
</dbReference>
<dbReference type="Gene3D" id="3.90.226.10">
    <property type="entry name" value="2-enoyl-CoA Hydratase, Chain A, domain 1"/>
    <property type="match status" value="1"/>
</dbReference>
<dbReference type="HAMAP" id="MF_00444">
    <property type="entry name" value="ClpP"/>
    <property type="match status" value="1"/>
</dbReference>
<dbReference type="InterPro" id="IPR001907">
    <property type="entry name" value="ClpP"/>
</dbReference>
<dbReference type="InterPro" id="IPR029045">
    <property type="entry name" value="ClpP/crotonase-like_dom_sf"/>
</dbReference>
<dbReference type="InterPro" id="IPR023562">
    <property type="entry name" value="ClpP/TepA"/>
</dbReference>
<dbReference type="InterPro" id="IPR033135">
    <property type="entry name" value="ClpP_His_AS"/>
</dbReference>
<dbReference type="NCBIfam" id="NF009205">
    <property type="entry name" value="PRK12553.1"/>
    <property type="match status" value="1"/>
</dbReference>
<dbReference type="PANTHER" id="PTHR10381">
    <property type="entry name" value="ATP-DEPENDENT CLP PROTEASE PROTEOLYTIC SUBUNIT"/>
    <property type="match status" value="1"/>
</dbReference>
<dbReference type="PANTHER" id="PTHR10381:SF70">
    <property type="entry name" value="ATP-DEPENDENT CLP PROTEASE PROTEOLYTIC SUBUNIT"/>
    <property type="match status" value="1"/>
</dbReference>
<dbReference type="Pfam" id="PF00574">
    <property type="entry name" value="CLP_protease"/>
    <property type="match status" value="1"/>
</dbReference>
<dbReference type="PRINTS" id="PR00127">
    <property type="entry name" value="CLPPROTEASEP"/>
</dbReference>
<dbReference type="SUPFAM" id="SSF52096">
    <property type="entry name" value="ClpP/crotonase"/>
    <property type="match status" value="1"/>
</dbReference>
<dbReference type="PROSITE" id="PS00382">
    <property type="entry name" value="CLP_PROTEASE_HIS"/>
    <property type="match status" value="1"/>
</dbReference>
<organism>
    <name type="scientific">Rhodococcus jostii (strain RHA1)</name>
    <dbReference type="NCBI Taxonomy" id="101510"/>
    <lineage>
        <taxon>Bacteria</taxon>
        <taxon>Bacillati</taxon>
        <taxon>Actinomycetota</taxon>
        <taxon>Actinomycetes</taxon>
        <taxon>Mycobacteriales</taxon>
        <taxon>Nocardiaceae</taxon>
        <taxon>Rhodococcus</taxon>
    </lineage>
</organism>